<evidence type="ECO:0000255" key="1">
    <source>
        <dbReference type="HAMAP-Rule" id="MF_01013"/>
    </source>
</evidence>
<proteinExistence type="inferred from homology"/>
<feature type="chain" id="PRO_1000063083" description="Imidazole glycerol phosphate synthase subunit HisF">
    <location>
        <begin position="1"/>
        <end position="268"/>
    </location>
</feature>
<feature type="active site" evidence="1">
    <location>
        <position position="12"/>
    </location>
</feature>
<feature type="active site" evidence="1">
    <location>
        <position position="131"/>
    </location>
</feature>
<name>HIS6_CHESB</name>
<dbReference type="EC" id="4.3.2.10" evidence="1"/>
<dbReference type="EMBL" id="CP000390">
    <property type="protein sequence ID" value="ABG64868.1"/>
    <property type="molecule type" value="Genomic_DNA"/>
</dbReference>
<dbReference type="SMR" id="Q11CK7"/>
<dbReference type="STRING" id="266779.Meso_3497"/>
<dbReference type="KEGG" id="mes:Meso_3497"/>
<dbReference type="eggNOG" id="COG0107">
    <property type="taxonomic scope" value="Bacteria"/>
</dbReference>
<dbReference type="HOGENOM" id="CLU_048577_4_0_5"/>
<dbReference type="OrthoDB" id="9781903at2"/>
<dbReference type="UniPathway" id="UPA00031">
    <property type="reaction ID" value="UER00010"/>
</dbReference>
<dbReference type="GO" id="GO:0005737">
    <property type="term" value="C:cytoplasm"/>
    <property type="evidence" value="ECO:0007669"/>
    <property type="project" value="UniProtKB-SubCell"/>
</dbReference>
<dbReference type="GO" id="GO:0000107">
    <property type="term" value="F:imidazoleglycerol-phosphate synthase activity"/>
    <property type="evidence" value="ECO:0007669"/>
    <property type="project" value="UniProtKB-UniRule"/>
</dbReference>
<dbReference type="GO" id="GO:0016829">
    <property type="term" value="F:lyase activity"/>
    <property type="evidence" value="ECO:0007669"/>
    <property type="project" value="UniProtKB-KW"/>
</dbReference>
<dbReference type="GO" id="GO:0000105">
    <property type="term" value="P:L-histidine biosynthetic process"/>
    <property type="evidence" value="ECO:0007669"/>
    <property type="project" value="UniProtKB-UniRule"/>
</dbReference>
<dbReference type="CDD" id="cd04731">
    <property type="entry name" value="HisF"/>
    <property type="match status" value="1"/>
</dbReference>
<dbReference type="FunFam" id="3.20.20.70:FF:000006">
    <property type="entry name" value="Imidazole glycerol phosphate synthase subunit HisF"/>
    <property type="match status" value="1"/>
</dbReference>
<dbReference type="Gene3D" id="3.20.20.70">
    <property type="entry name" value="Aldolase class I"/>
    <property type="match status" value="1"/>
</dbReference>
<dbReference type="HAMAP" id="MF_01013">
    <property type="entry name" value="HisF"/>
    <property type="match status" value="1"/>
</dbReference>
<dbReference type="InterPro" id="IPR013785">
    <property type="entry name" value="Aldolase_TIM"/>
</dbReference>
<dbReference type="InterPro" id="IPR006062">
    <property type="entry name" value="His_biosynth"/>
</dbReference>
<dbReference type="InterPro" id="IPR004651">
    <property type="entry name" value="HisF"/>
</dbReference>
<dbReference type="InterPro" id="IPR050064">
    <property type="entry name" value="IGPS_HisA/HisF"/>
</dbReference>
<dbReference type="InterPro" id="IPR011060">
    <property type="entry name" value="RibuloseP-bd_barrel"/>
</dbReference>
<dbReference type="NCBIfam" id="TIGR00735">
    <property type="entry name" value="hisF"/>
    <property type="match status" value="1"/>
</dbReference>
<dbReference type="PANTHER" id="PTHR21235:SF2">
    <property type="entry name" value="IMIDAZOLE GLYCEROL PHOSPHATE SYNTHASE HISHF"/>
    <property type="match status" value="1"/>
</dbReference>
<dbReference type="PANTHER" id="PTHR21235">
    <property type="entry name" value="IMIDAZOLE GLYCEROL PHOSPHATE SYNTHASE SUBUNIT HISF/H IGP SYNTHASE SUBUNIT HISF/H"/>
    <property type="match status" value="1"/>
</dbReference>
<dbReference type="Pfam" id="PF00977">
    <property type="entry name" value="His_biosynth"/>
    <property type="match status" value="1"/>
</dbReference>
<dbReference type="SUPFAM" id="SSF51366">
    <property type="entry name" value="Ribulose-phoshate binding barrel"/>
    <property type="match status" value="1"/>
</dbReference>
<gene>
    <name evidence="1" type="primary">hisF</name>
    <name type="ordered locus">Meso_3497</name>
</gene>
<protein>
    <recommendedName>
        <fullName evidence="1">Imidazole glycerol phosphate synthase subunit HisF</fullName>
        <ecNumber evidence="1">4.3.2.10</ecNumber>
    </recommendedName>
    <alternativeName>
        <fullName evidence="1">IGP synthase cyclase subunit</fullName>
    </alternativeName>
    <alternativeName>
        <fullName evidence="1">IGP synthase subunit HisF</fullName>
    </alternativeName>
    <alternativeName>
        <fullName evidence="1">ImGP synthase subunit HisF</fullName>
        <shortName evidence="1">IGPS subunit HisF</shortName>
    </alternativeName>
</protein>
<keyword id="KW-0028">Amino-acid biosynthesis</keyword>
<keyword id="KW-0963">Cytoplasm</keyword>
<keyword id="KW-0368">Histidine biosynthesis</keyword>
<keyword id="KW-0456">Lyase</keyword>
<comment type="function">
    <text evidence="1">IGPS catalyzes the conversion of PRFAR and glutamine to IGP, AICAR and glutamate. The HisF subunit catalyzes the cyclization activity that produces IGP and AICAR from PRFAR using the ammonia provided by the HisH subunit.</text>
</comment>
<comment type="catalytic activity">
    <reaction evidence="1">
        <text>5-[(5-phospho-1-deoxy-D-ribulos-1-ylimino)methylamino]-1-(5-phospho-beta-D-ribosyl)imidazole-4-carboxamide + L-glutamine = D-erythro-1-(imidazol-4-yl)glycerol 3-phosphate + 5-amino-1-(5-phospho-beta-D-ribosyl)imidazole-4-carboxamide + L-glutamate + H(+)</text>
        <dbReference type="Rhea" id="RHEA:24793"/>
        <dbReference type="ChEBI" id="CHEBI:15378"/>
        <dbReference type="ChEBI" id="CHEBI:29985"/>
        <dbReference type="ChEBI" id="CHEBI:58278"/>
        <dbReference type="ChEBI" id="CHEBI:58359"/>
        <dbReference type="ChEBI" id="CHEBI:58475"/>
        <dbReference type="ChEBI" id="CHEBI:58525"/>
        <dbReference type="EC" id="4.3.2.10"/>
    </reaction>
</comment>
<comment type="pathway">
    <text evidence="1">Amino-acid biosynthesis; L-histidine biosynthesis; L-histidine from 5-phospho-alpha-D-ribose 1-diphosphate: step 5/9.</text>
</comment>
<comment type="subunit">
    <text evidence="1">Heterodimer of HisH and HisF.</text>
</comment>
<comment type="subcellular location">
    <subcellularLocation>
        <location evidence="1">Cytoplasm</location>
    </subcellularLocation>
</comment>
<comment type="similarity">
    <text evidence="1">Belongs to the HisA/HisF family.</text>
</comment>
<reference key="1">
    <citation type="submission" date="2006-06" db="EMBL/GenBank/DDBJ databases">
        <title>Complete sequence of chromosome of Mesorhizobium sp. BNC1.</title>
        <authorList>
            <consortium name="US DOE Joint Genome Institute"/>
            <person name="Copeland A."/>
            <person name="Lucas S."/>
            <person name="Lapidus A."/>
            <person name="Barry K."/>
            <person name="Detter J.C."/>
            <person name="Glavina del Rio T."/>
            <person name="Hammon N."/>
            <person name="Israni S."/>
            <person name="Dalin E."/>
            <person name="Tice H."/>
            <person name="Pitluck S."/>
            <person name="Chertkov O."/>
            <person name="Brettin T."/>
            <person name="Bruce D."/>
            <person name="Han C."/>
            <person name="Tapia R."/>
            <person name="Gilna P."/>
            <person name="Schmutz J."/>
            <person name="Larimer F."/>
            <person name="Land M."/>
            <person name="Hauser L."/>
            <person name="Kyrpides N."/>
            <person name="Mikhailova N."/>
            <person name="Richardson P."/>
        </authorList>
    </citation>
    <scope>NUCLEOTIDE SEQUENCE [LARGE SCALE GENOMIC DNA]</scope>
    <source>
        <strain>BNC1</strain>
    </source>
</reference>
<accession>Q11CK7</accession>
<organism>
    <name type="scientific">Chelativorans sp. (strain BNC1)</name>
    <dbReference type="NCBI Taxonomy" id="266779"/>
    <lineage>
        <taxon>Bacteria</taxon>
        <taxon>Pseudomonadati</taxon>
        <taxon>Pseudomonadota</taxon>
        <taxon>Alphaproteobacteria</taxon>
        <taxon>Hyphomicrobiales</taxon>
        <taxon>Phyllobacteriaceae</taxon>
        <taxon>Chelativorans</taxon>
    </lineage>
</organism>
<sequence>MTLKARVIPCLDVKDGRVVKGVQFVDLIDAGDPVEAATAYDAAGADELCFLDITASHENRETIFDVIARTAEQCFMPLTVGGGVRQIPDIRRLLLAGADKVSINTAAVKEPEFVARAADKFGDQCIVVAIDAKKVSPPGQADRWEIFTHGGRNPTGIDAVEFARRVVDLGAGEILLTSMDRDGTKAGYDIALTQAVADAVRAPVIASGGVGTLDHLVEGIRDGHATAVLAASIFHFGTYTVAEAKRYMADAGIPMRLDAANAEGNAHE</sequence>